<protein>
    <recommendedName>
        <fullName>Small nuclear ribonucleoprotein-associated protein B'</fullName>
        <shortName>snRNP-B'</shortName>
        <shortName>snRPB'</shortName>
    </recommendedName>
    <alternativeName>
        <fullName>Sm protein B'</fullName>
        <shortName>Sm-B'</shortName>
        <shortName>SmB'</shortName>
    </alternativeName>
</protein>
<reference key="1">
    <citation type="journal article" date="1999" name="Nucleic Acids Res.">
        <title>Concerted regulation and molecular evolution of the duplicated SNRPB'/B and SNRPN loci.</title>
        <authorList>
            <person name="Gray T.A."/>
            <person name="Smithwick M.J."/>
            <person name="Schaldach M.A."/>
            <person name="Martone D.L."/>
            <person name="Graves J.A."/>
            <person name="McCarrey J.R."/>
            <person name="Nicholls R.D."/>
        </authorList>
    </citation>
    <scope>NUCLEOTIDE SEQUENCE [MRNA]</scope>
</reference>
<keyword id="KW-0963">Cytoplasm</keyword>
<keyword id="KW-0507">mRNA processing</keyword>
<keyword id="KW-0508">mRNA splicing</keyword>
<keyword id="KW-0539">Nucleus</keyword>
<keyword id="KW-1185">Reference proteome</keyword>
<keyword id="KW-0677">Repeat</keyword>
<keyword id="KW-0687">Ribonucleoprotein</keyword>
<keyword id="KW-0694">RNA-binding</keyword>
<keyword id="KW-0747">Spliceosome</keyword>
<proteinExistence type="evidence at transcript level"/>
<feature type="chain" id="PRO_0000125521" description="Small nuclear ribonucleoprotein-associated protein B'">
    <location>
        <begin position="1"/>
        <end position="240"/>
    </location>
</feature>
<feature type="domain" description="Sm" evidence="3">
    <location>
        <begin position="4"/>
        <end position="86"/>
    </location>
</feature>
<feature type="repeat">
    <location>
        <begin position="175"/>
        <end position="181"/>
    </location>
</feature>
<feature type="repeat">
    <location>
        <begin position="191"/>
        <end position="196"/>
    </location>
</feature>
<feature type="repeat">
    <location>
        <begin position="216"/>
        <end position="221"/>
    </location>
</feature>
<feature type="repeat">
    <location>
        <begin position="222"/>
        <end position="228"/>
    </location>
</feature>
<feature type="repeat">
    <location>
        <begin position="230"/>
        <end position="236"/>
    </location>
</feature>
<feature type="region of interest" description="Disordered" evidence="4">
    <location>
        <begin position="164"/>
        <end position="240"/>
    </location>
</feature>
<feature type="region of interest" description="Repeat-rich region">
    <location>
        <begin position="175"/>
        <end position="236"/>
    </location>
</feature>
<feature type="compositionally biased region" description="Pro residues" evidence="4">
    <location>
        <begin position="173"/>
        <end position="205"/>
    </location>
</feature>
<feature type="compositionally biased region" description="Pro residues" evidence="4">
    <location>
        <begin position="214"/>
        <end position="240"/>
    </location>
</feature>
<gene>
    <name type="primary">SNRPB</name>
</gene>
<organism>
    <name type="scientific">Gallus gallus</name>
    <name type="common">Chicken</name>
    <dbReference type="NCBI Taxonomy" id="9031"/>
    <lineage>
        <taxon>Eukaryota</taxon>
        <taxon>Metazoa</taxon>
        <taxon>Chordata</taxon>
        <taxon>Craniata</taxon>
        <taxon>Vertebrata</taxon>
        <taxon>Euteleostomi</taxon>
        <taxon>Archelosauria</taxon>
        <taxon>Archosauria</taxon>
        <taxon>Dinosauria</taxon>
        <taxon>Saurischia</taxon>
        <taxon>Theropoda</taxon>
        <taxon>Coelurosauria</taxon>
        <taxon>Aves</taxon>
        <taxon>Neognathae</taxon>
        <taxon>Galloanserae</taxon>
        <taxon>Galliformes</taxon>
        <taxon>Phasianidae</taxon>
        <taxon>Phasianinae</taxon>
        <taxon>Gallus</taxon>
    </lineage>
</organism>
<comment type="function">
    <text evidence="1">Plays a role in pre-mRNA splicing as a core component of the spliceosomal U1, U2, U4 and U5 small nuclear ribonucleoproteins (snRNPs), the building blocks of the spliceosome (By similarity). Component of both the pre-catalytic spliceosome B complex and activated spliceosome C complexes (By similarity). As a component of the minor spliceosome, involved in the splicing of U12-type introns in pre-mRNAs (By similarity). As part of the U7 snRNP it is involved in histone pre-mRNA 3'-end processing (By similarity).</text>
</comment>
<comment type="subunit">
    <text evidence="1 2">Core component of the spliceosomal U1, U2, U4 and U5 small nuclear ribonucleoproteins (snRNPs), the building blocks of the spliceosome (By similarity). Most spliceosomal snRNPs contain a common set of Sm proteins, SNRPB, SNRPD1, SNRPD2, SNRPD3, SNRPE, SNRPF and SNRPG that assemble in a heptameric protein ring on the Sm site of the small nuclear RNA to form the core snRNP (By similarity). Component of the U1 snRNP (By similarity). The U1 snRNP is composed of the U1 snRNA and the 7 core Sm proteins SNRPB, SNRPD1, SNRPD2, SNRPD3, SNRPE, SNRPF and SNRPG, and at least three U1 snRNP-specific proteins SNRNP70/U1-70K, SNRPA/U1-A and SNRPC/U1-C (By similarity). Component of the U4/U6-U5 tri-snRNP complex composed of the U4, U6 and U5 snRNAs and at least PRPF3, PRPF4, PRPF6, PRPF8, PRPF31, SNRNP200, TXNL4A, SNRNP40, SNRPB, SNRPD1, SNRPD2, SNRPD3, SNRPE, SNRPF, SNRPG, DDX23, CD2BP2, PPIH, SNU13, EFTUD2, SART1 and USP39, plus LSM2, LSM3, LSM4, LSM5, LSM6, LSM7 and LSM8 (By similarity). Component of the U7 snRNP complex, or U7 Sm protein core complex, that is composed of the U7 snRNA and at least LSM10, LSM11, SNRPB, SNRPD3, SNRPE, SNRPF and SNRPG; the complex does not contain SNRPD1 and SNRPD2 (By similarity). Component of the minor spliceosome, which splices U12-type introns (By similarity). Part of the SMN-Sm complex that contains SMN1, GEMIN2/SIP1, DDX20/GEMIN3, GEMIN4, GEMIN5, GEMIN6, GEMIN7, GEMIN8, STRAP/UNRIP and the Sm proteins SNRPB, SNRPD1, SNRPD2, SNRPD3, SNRPE, SNRPF and SNRPG; catalyzes core snRNPs assembly (By similarity). Forms a 6S pICln-Sm complex composed of CLNS1A/pICln, SNRPD1, SNRPD2, SNRPE, SNRPF and SNRPG; ring-like structure where CLNS1A/pICln mimics additional Sm proteins and which is unable to assemble into the core snRNP (By similarity). Identified in a histone pre-mRNA complex, at least composed of ERI1, LSM11, SLBP, SNRPB, SYNCRIP and YBX1 (By similarity). Interacts with TDRD3 and SNUPN (By similarity). Interacts with PRMT5; interaction leads to its symmetric arginine dimethylation (By similarity). Interacts with TDRD6; interaction promotes association with PRMT5 (By similarity). Interacts with SMN1; the interaction is direct (By similarity).</text>
</comment>
<comment type="subcellular location">
    <subcellularLocation>
        <location evidence="1">Cytoplasm</location>
        <location evidence="1">Cytosol</location>
    </subcellularLocation>
    <subcellularLocation>
        <location evidence="1">Nucleus</location>
    </subcellularLocation>
</comment>
<comment type="similarity">
    <text evidence="5">Belongs to the snRNP SmB/SmN family.</text>
</comment>
<name>RSMB_CHICK</name>
<evidence type="ECO:0000250" key="1">
    <source>
        <dbReference type="UniProtKB" id="P14678"/>
    </source>
</evidence>
<evidence type="ECO:0000250" key="2">
    <source>
        <dbReference type="UniProtKB" id="P27048"/>
    </source>
</evidence>
<evidence type="ECO:0000255" key="3">
    <source>
        <dbReference type="PROSITE-ProRule" id="PRU01346"/>
    </source>
</evidence>
<evidence type="ECO:0000256" key="4">
    <source>
        <dbReference type="SAM" id="MobiDB-lite"/>
    </source>
</evidence>
<evidence type="ECO:0000305" key="5"/>
<dbReference type="EMBL" id="AF134830">
    <property type="protein sequence ID" value="AAD54485.1"/>
    <property type="molecule type" value="mRNA"/>
</dbReference>
<dbReference type="RefSeq" id="NP_989930.1">
    <property type="nucleotide sequence ID" value="NM_204599.1"/>
</dbReference>
<dbReference type="SMR" id="Q9PV94"/>
<dbReference type="FunCoup" id="Q9PV94">
    <property type="interactions" value="549"/>
</dbReference>
<dbReference type="STRING" id="9031.ENSGALP00000046899"/>
<dbReference type="PaxDb" id="9031-ENSGALP00000011718"/>
<dbReference type="Ensembl" id="ENSGALT00010038915.1">
    <property type="protein sequence ID" value="ENSGALP00010022487.1"/>
    <property type="gene ID" value="ENSGALG00010016197.1"/>
</dbReference>
<dbReference type="GeneID" id="395298"/>
<dbReference type="KEGG" id="gga:395298"/>
<dbReference type="CTD" id="6638"/>
<dbReference type="VEuPathDB" id="HostDB:geneid_395298"/>
<dbReference type="eggNOG" id="KOG3168">
    <property type="taxonomic scope" value="Eukaryota"/>
</dbReference>
<dbReference type="GeneTree" id="ENSGT00940000155052"/>
<dbReference type="InParanoid" id="Q9PV94"/>
<dbReference type="OMA" id="KMINYRM"/>
<dbReference type="OrthoDB" id="2020720at2759"/>
<dbReference type="PhylomeDB" id="Q9PV94"/>
<dbReference type="TreeFam" id="TF314232"/>
<dbReference type="Reactome" id="R-GGA-111367">
    <property type="pathway name" value="SLBP independent Processing of Histone Pre-mRNAs"/>
</dbReference>
<dbReference type="Reactome" id="R-GGA-191859">
    <property type="pathway name" value="snRNP Assembly"/>
</dbReference>
<dbReference type="Reactome" id="R-GGA-72163">
    <property type="pathway name" value="mRNA Splicing - Major Pathway"/>
</dbReference>
<dbReference type="Reactome" id="R-GGA-72165">
    <property type="pathway name" value="mRNA Splicing - Minor Pathway"/>
</dbReference>
<dbReference type="Reactome" id="R-GGA-73856">
    <property type="pathway name" value="RNA Polymerase II Transcription Termination"/>
</dbReference>
<dbReference type="Reactome" id="R-GGA-77588">
    <property type="pathway name" value="SLBP Dependent Processing of Replication-Dependent Histone Pre-mRNAs"/>
</dbReference>
<dbReference type="PRO" id="PR:Q9PV94"/>
<dbReference type="Proteomes" id="UP000000539">
    <property type="component" value="Chromosome 20"/>
</dbReference>
<dbReference type="Bgee" id="ENSGALG00000035421">
    <property type="expression patterns" value="Expressed in testis and 13 other cell types or tissues"/>
</dbReference>
<dbReference type="GO" id="GO:0071013">
    <property type="term" value="C:catalytic step 2 spliceosome"/>
    <property type="evidence" value="ECO:0000318"/>
    <property type="project" value="GO_Central"/>
</dbReference>
<dbReference type="GO" id="GO:0005737">
    <property type="term" value="C:cytoplasm"/>
    <property type="evidence" value="ECO:0000318"/>
    <property type="project" value="GO_Central"/>
</dbReference>
<dbReference type="GO" id="GO:0005829">
    <property type="term" value="C:cytosol"/>
    <property type="evidence" value="ECO:0000250"/>
    <property type="project" value="UniProtKB"/>
</dbReference>
<dbReference type="GO" id="GO:0034709">
    <property type="term" value="C:methylosome"/>
    <property type="evidence" value="ECO:0000250"/>
    <property type="project" value="UniProtKB"/>
</dbReference>
<dbReference type="GO" id="GO:0005654">
    <property type="term" value="C:nucleoplasm"/>
    <property type="evidence" value="ECO:0007669"/>
    <property type="project" value="Ensembl"/>
</dbReference>
<dbReference type="GO" id="GO:0005634">
    <property type="term" value="C:nucleus"/>
    <property type="evidence" value="ECO:0000250"/>
    <property type="project" value="UniProtKB"/>
</dbReference>
<dbReference type="GO" id="GO:0034719">
    <property type="term" value="C:SMN-Sm protein complex"/>
    <property type="evidence" value="ECO:0000250"/>
    <property type="project" value="UniProtKB"/>
</dbReference>
<dbReference type="GO" id="GO:0005697">
    <property type="term" value="C:telomerase holoenzyme complex"/>
    <property type="evidence" value="ECO:0007669"/>
    <property type="project" value="Ensembl"/>
</dbReference>
<dbReference type="GO" id="GO:0005685">
    <property type="term" value="C:U1 snRNP"/>
    <property type="evidence" value="ECO:0000250"/>
    <property type="project" value="UniProtKB"/>
</dbReference>
<dbReference type="GO" id="GO:0005689">
    <property type="term" value="C:U12-type spliceosomal complex"/>
    <property type="evidence" value="ECO:0007669"/>
    <property type="project" value="Ensembl"/>
</dbReference>
<dbReference type="GO" id="GO:0005686">
    <property type="term" value="C:U2 snRNP"/>
    <property type="evidence" value="ECO:0000318"/>
    <property type="project" value="GO_Central"/>
</dbReference>
<dbReference type="GO" id="GO:0071007">
    <property type="term" value="C:U2-type catalytic step 2 spliceosome"/>
    <property type="evidence" value="ECO:0000250"/>
    <property type="project" value="UniProtKB"/>
</dbReference>
<dbReference type="GO" id="GO:0071005">
    <property type="term" value="C:U2-type precatalytic spliceosome"/>
    <property type="evidence" value="ECO:0000250"/>
    <property type="project" value="UniProtKB"/>
</dbReference>
<dbReference type="GO" id="GO:0071004">
    <property type="term" value="C:U2-type prespliceosome"/>
    <property type="evidence" value="ECO:0000318"/>
    <property type="project" value="GO_Central"/>
</dbReference>
<dbReference type="GO" id="GO:0005684">
    <property type="term" value="C:U2-type spliceosomal complex"/>
    <property type="evidence" value="ECO:0000250"/>
    <property type="project" value="UniProtKB"/>
</dbReference>
<dbReference type="GO" id="GO:0005687">
    <property type="term" value="C:U4 snRNP"/>
    <property type="evidence" value="ECO:0000250"/>
    <property type="project" value="UniProtKB"/>
</dbReference>
<dbReference type="GO" id="GO:0046540">
    <property type="term" value="C:U4/U6 x U5 tri-snRNP complex"/>
    <property type="evidence" value="ECO:0000250"/>
    <property type="project" value="UniProtKB"/>
</dbReference>
<dbReference type="GO" id="GO:0005682">
    <property type="term" value="C:U5 snRNP"/>
    <property type="evidence" value="ECO:0000318"/>
    <property type="project" value="GO_Central"/>
</dbReference>
<dbReference type="GO" id="GO:0005683">
    <property type="term" value="C:U7 snRNP"/>
    <property type="evidence" value="ECO:0007669"/>
    <property type="project" value="Ensembl"/>
</dbReference>
<dbReference type="GO" id="GO:0070990">
    <property type="term" value="F:snRNP binding"/>
    <property type="evidence" value="ECO:0000318"/>
    <property type="project" value="GO_Central"/>
</dbReference>
<dbReference type="GO" id="GO:0070034">
    <property type="term" value="F:telomerase RNA binding"/>
    <property type="evidence" value="ECO:0007669"/>
    <property type="project" value="Ensembl"/>
</dbReference>
<dbReference type="GO" id="GO:0000398">
    <property type="term" value="P:mRNA splicing, via spliceosome"/>
    <property type="evidence" value="ECO:0000250"/>
    <property type="project" value="UniProtKB"/>
</dbReference>
<dbReference type="GO" id="GO:0000387">
    <property type="term" value="P:spliceosomal snRNP assembly"/>
    <property type="evidence" value="ECO:0000250"/>
    <property type="project" value="UniProtKB"/>
</dbReference>
<dbReference type="CDD" id="cd01717">
    <property type="entry name" value="Sm_B"/>
    <property type="match status" value="1"/>
</dbReference>
<dbReference type="FunFam" id="2.30.30.100:FF:000004">
    <property type="entry name" value="Small nuclear ribonucleoprotein-associated proteins"/>
    <property type="match status" value="1"/>
</dbReference>
<dbReference type="Gene3D" id="2.30.30.100">
    <property type="match status" value="1"/>
</dbReference>
<dbReference type="InterPro" id="IPR010920">
    <property type="entry name" value="LSM_dom_sf"/>
</dbReference>
<dbReference type="InterPro" id="IPR047575">
    <property type="entry name" value="Sm"/>
</dbReference>
<dbReference type="InterPro" id="IPR001163">
    <property type="entry name" value="Sm_dom_euk/arc"/>
</dbReference>
<dbReference type="InterPro" id="IPR017131">
    <property type="entry name" value="snRNP-assoc_SmB/SmN"/>
</dbReference>
<dbReference type="PANTHER" id="PTHR14508">
    <property type="entry name" value="SNRPN UPSTREAM READING FRAME PROTEIN, SNURF"/>
    <property type="match status" value="1"/>
</dbReference>
<dbReference type="PANTHER" id="PTHR14508:SF2">
    <property type="entry name" value="SNRPN UPSTREAM READING FRAME PROTEIN-RELATED"/>
    <property type="match status" value="1"/>
</dbReference>
<dbReference type="Pfam" id="PF01423">
    <property type="entry name" value="LSM"/>
    <property type="match status" value="1"/>
</dbReference>
<dbReference type="PIRSF" id="PIRSF037187">
    <property type="entry name" value="snRNP_SmB/SmN"/>
    <property type="match status" value="1"/>
</dbReference>
<dbReference type="SMART" id="SM00651">
    <property type="entry name" value="Sm"/>
    <property type="match status" value="1"/>
</dbReference>
<dbReference type="SUPFAM" id="SSF50182">
    <property type="entry name" value="Sm-like ribonucleoproteins"/>
    <property type="match status" value="1"/>
</dbReference>
<dbReference type="PROSITE" id="PS52002">
    <property type="entry name" value="SM"/>
    <property type="match status" value="1"/>
</dbReference>
<sequence>MTVGKSSKMLQHIDYRMRCILQDGRVFIGTFKAFDKHMNLILCDCDEFRKIKPKNSKQPEREEKRVLGLVLLRGENLVSMTVEGPPPKDTGIARVPLAGAAGGPGVGRAAGRGVPAGAPMPQAPAGLAGPVRGVGGPSQQVMTPQGRGTVAAAAAAATASIAGAPTQYTPGRGGPPPPMSRGAPPPGMMGPPPGMRPPMGPPMGMPPGRGAPMGMPPPGMRPPPPGMRGPPPPGMRPPRP</sequence>
<accession>Q9PV94</accession>